<name>HIS8_CITBB</name>
<reference key="1">
    <citation type="submission" date="2008-07" db="EMBL/GenBank/DDBJ databases">
        <title>Complete sequence of Geobacter bemidjiensis BEM.</title>
        <authorList>
            <consortium name="US DOE Joint Genome Institute"/>
            <person name="Lucas S."/>
            <person name="Copeland A."/>
            <person name="Lapidus A."/>
            <person name="Glavina del Rio T."/>
            <person name="Dalin E."/>
            <person name="Tice H."/>
            <person name="Bruce D."/>
            <person name="Goodwin L."/>
            <person name="Pitluck S."/>
            <person name="Kiss H."/>
            <person name="Brettin T."/>
            <person name="Detter J.C."/>
            <person name="Han C."/>
            <person name="Kuske C.R."/>
            <person name="Schmutz J."/>
            <person name="Larimer F."/>
            <person name="Land M."/>
            <person name="Hauser L."/>
            <person name="Kyrpides N."/>
            <person name="Lykidis A."/>
            <person name="Lovley D."/>
            <person name="Richardson P."/>
        </authorList>
    </citation>
    <scope>NUCLEOTIDE SEQUENCE [LARGE SCALE GENOMIC DNA]</scope>
    <source>
        <strain>ATCC BAA-1014 / DSM 16622 / JCM 12645 / Bem</strain>
    </source>
</reference>
<comment type="catalytic activity">
    <reaction evidence="1">
        <text>L-histidinol phosphate + 2-oxoglutarate = 3-(imidazol-4-yl)-2-oxopropyl phosphate + L-glutamate</text>
        <dbReference type="Rhea" id="RHEA:23744"/>
        <dbReference type="ChEBI" id="CHEBI:16810"/>
        <dbReference type="ChEBI" id="CHEBI:29985"/>
        <dbReference type="ChEBI" id="CHEBI:57766"/>
        <dbReference type="ChEBI" id="CHEBI:57980"/>
        <dbReference type="EC" id="2.6.1.9"/>
    </reaction>
</comment>
<comment type="cofactor">
    <cofactor evidence="1">
        <name>pyridoxal 5'-phosphate</name>
        <dbReference type="ChEBI" id="CHEBI:597326"/>
    </cofactor>
</comment>
<comment type="pathway">
    <text evidence="1">Amino-acid biosynthesis; L-histidine biosynthesis; L-histidine from 5-phospho-alpha-D-ribose 1-diphosphate: step 7/9.</text>
</comment>
<comment type="subunit">
    <text evidence="1">Homodimer.</text>
</comment>
<comment type="similarity">
    <text evidence="1">Belongs to the class-II pyridoxal-phosphate-dependent aminotransferase family. Histidinol-phosphate aminotransferase subfamily.</text>
</comment>
<protein>
    <recommendedName>
        <fullName evidence="1">Histidinol-phosphate aminotransferase</fullName>
        <ecNumber evidence="1">2.6.1.9</ecNumber>
    </recommendedName>
    <alternativeName>
        <fullName evidence="1">Imidazole acetol-phosphate transaminase</fullName>
    </alternativeName>
</protein>
<feature type="chain" id="PRO_1000135401" description="Histidinol-phosphate aminotransferase">
    <location>
        <begin position="1"/>
        <end position="350"/>
    </location>
</feature>
<feature type="modified residue" description="N6-(pyridoxal phosphate)lysine" evidence="1">
    <location>
        <position position="209"/>
    </location>
</feature>
<gene>
    <name evidence="1" type="primary">hisC</name>
    <name type="ordered locus">Gbem_0236</name>
</gene>
<organism>
    <name type="scientific">Citrifermentans bemidjiense (strain ATCC BAA-1014 / DSM 16622 / JCM 12645 / Bem)</name>
    <name type="common">Geobacter bemidjiensis</name>
    <dbReference type="NCBI Taxonomy" id="404380"/>
    <lineage>
        <taxon>Bacteria</taxon>
        <taxon>Pseudomonadati</taxon>
        <taxon>Thermodesulfobacteriota</taxon>
        <taxon>Desulfuromonadia</taxon>
        <taxon>Geobacterales</taxon>
        <taxon>Geobacteraceae</taxon>
        <taxon>Citrifermentans</taxon>
    </lineage>
</organism>
<dbReference type="EC" id="2.6.1.9" evidence="1"/>
<dbReference type="EMBL" id="CP001124">
    <property type="protein sequence ID" value="ACH37267.1"/>
    <property type="molecule type" value="Genomic_DNA"/>
</dbReference>
<dbReference type="RefSeq" id="WP_012528675.1">
    <property type="nucleotide sequence ID" value="NC_011146.1"/>
</dbReference>
<dbReference type="SMR" id="B5E9W9"/>
<dbReference type="STRING" id="404380.Gbem_0236"/>
<dbReference type="KEGG" id="gbm:Gbem_0236"/>
<dbReference type="eggNOG" id="COG0079">
    <property type="taxonomic scope" value="Bacteria"/>
</dbReference>
<dbReference type="HOGENOM" id="CLU_017584_3_0_7"/>
<dbReference type="OrthoDB" id="9813612at2"/>
<dbReference type="UniPathway" id="UPA00031">
    <property type="reaction ID" value="UER00012"/>
</dbReference>
<dbReference type="Proteomes" id="UP000008825">
    <property type="component" value="Chromosome"/>
</dbReference>
<dbReference type="GO" id="GO:0004400">
    <property type="term" value="F:histidinol-phosphate transaminase activity"/>
    <property type="evidence" value="ECO:0007669"/>
    <property type="project" value="UniProtKB-UniRule"/>
</dbReference>
<dbReference type="GO" id="GO:0030170">
    <property type="term" value="F:pyridoxal phosphate binding"/>
    <property type="evidence" value="ECO:0007669"/>
    <property type="project" value="InterPro"/>
</dbReference>
<dbReference type="GO" id="GO:0000105">
    <property type="term" value="P:L-histidine biosynthetic process"/>
    <property type="evidence" value="ECO:0007669"/>
    <property type="project" value="UniProtKB-UniRule"/>
</dbReference>
<dbReference type="CDD" id="cd00609">
    <property type="entry name" value="AAT_like"/>
    <property type="match status" value="1"/>
</dbReference>
<dbReference type="Gene3D" id="3.90.1150.10">
    <property type="entry name" value="Aspartate Aminotransferase, domain 1"/>
    <property type="match status" value="1"/>
</dbReference>
<dbReference type="Gene3D" id="3.40.640.10">
    <property type="entry name" value="Type I PLP-dependent aspartate aminotransferase-like (Major domain)"/>
    <property type="match status" value="1"/>
</dbReference>
<dbReference type="HAMAP" id="MF_01023">
    <property type="entry name" value="HisC_aminotrans_2"/>
    <property type="match status" value="1"/>
</dbReference>
<dbReference type="InterPro" id="IPR001917">
    <property type="entry name" value="Aminotrans_II_pyridoxalP_BS"/>
</dbReference>
<dbReference type="InterPro" id="IPR004839">
    <property type="entry name" value="Aminotransferase_I/II_large"/>
</dbReference>
<dbReference type="InterPro" id="IPR005861">
    <property type="entry name" value="HisP_aminotrans"/>
</dbReference>
<dbReference type="InterPro" id="IPR050106">
    <property type="entry name" value="HistidinolP_aminotransfase"/>
</dbReference>
<dbReference type="InterPro" id="IPR015424">
    <property type="entry name" value="PyrdxlP-dep_Trfase"/>
</dbReference>
<dbReference type="InterPro" id="IPR015421">
    <property type="entry name" value="PyrdxlP-dep_Trfase_major"/>
</dbReference>
<dbReference type="InterPro" id="IPR015422">
    <property type="entry name" value="PyrdxlP-dep_Trfase_small"/>
</dbReference>
<dbReference type="NCBIfam" id="TIGR01141">
    <property type="entry name" value="hisC"/>
    <property type="match status" value="1"/>
</dbReference>
<dbReference type="PANTHER" id="PTHR43643:SF3">
    <property type="entry name" value="HISTIDINOL-PHOSPHATE AMINOTRANSFERASE"/>
    <property type="match status" value="1"/>
</dbReference>
<dbReference type="PANTHER" id="PTHR43643">
    <property type="entry name" value="HISTIDINOL-PHOSPHATE AMINOTRANSFERASE 2"/>
    <property type="match status" value="1"/>
</dbReference>
<dbReference type="Pfam" id="PF00155">
    <property type="entry name" value="Aminotran_1_2"/>
    <property type="match status" value="1"/>
</dbReference>
<dbReference type="SUPFAM" id="SSF53383">
    <property type="entry name" value="PLP-dependent transferases"/>
    <property type="match status" value="1"/>
</dbReference>
<dbReference type="PROSITE" id="PS00599">
    <property type="entry name" value="AA_TRANSFER_CLASS_2"/>
    <property type="match status" value="1"/>
</dbReference>
<sequence>MIALRENIAEMAGYVPGFQPLDVDSYIKLNTNENPYPPSPKVLEAIAKEAGEGLRRYPDAASRLAREEAAKVYGFDPSWIIMANGSDEVLNNLIRACAGEGEEIAFINPSYSYYGTLAEVQGARVRTFGLSESFEPEGIPEHYDGKLFFLTNPNAPLGFTYSQRYIADLAGRLSGVLVVDEAYVDFAEETSLELVRSFDNVVVTRTFSKSYSLAGMRLGLAIARPEIIAALNKIRDHYNLDRLAQAAAAAALADQPYFQECVRKIKETRAWFTAELQQLGYQVIPSSGNFVFASPPDRDGTRIYQGLYDRKILVRHFTDPKLAHGLRISIGSREEMEQTVKALRELGPGR</sequence>
<proteinExistence type="inferred from homology"/>
<keyword id="KW-0028">Amino-acid biosynthesis</keyword>
<keyword id="KW-0032">Aminotransferase</keyword>
<keyword id="KW-0368">Histidine biosynthesis</keyword>
<keyword id="KW-0663">Pyridoxal phosphate</keyword>
<keyword id="KW-1185">Reference proteome</keyword>
<keyword id="KW-0808">Transferase</keyword>
<evidence type="ECO:0000255" key="1">
    <source>
        <dbReference type="HAMAP-Rule" id="MF_01023"/>
    </source>
</evidence>
<accession>B5E9W9</accession>